<dbReference type="EMBL" id="D83778">
    <property type="protein sequence ID" value="BAA12107.1"/>
    <property type="status" value="ALT_INIT"/>
    <property type="molecule type" value="mRNA"/>
</dbReference>
<dbReference type="EMBL" id="AC011406">
    <property type="status" value="NOT_ANNOTATED_CDS"/>
    <property type="molecule type" value="Genomic_DNA"/>
</dbReference>
<dbReference type="EMBL" id="CH471062">
    <property type="protein sequence ID" value="EAW61752.1"/>
    <property type="molecule type" value="Genomic_DNA"/>
</dbReference>
<dbReference type="EMBL" id="BC051025">
    <property type="protein sequence ID" value="AAH51025.1"/>
    <property type="status" value="ALT_INIT"/>
    <property type="molecule type" value="mRNA"/>
</dbReference>
<dbReference type="EMBL" id="U63963">
    <property type="protein sequence ID" value="AAB51697.1"/>
    <property type="molecule type" value="Genomic_DNA"/>
</dbReference>
<dbReference type="CCDS" id="CCDS54935.1"/>
<dbReference type="RefSeq" id="NP_055798.3">
    <property type="nucleotide sequence ID" value="NM_014983.3"/>
</dbReference>
<dbReference type="SMR" id="Q12766"/>
<dbReference type="BioGRID" id="116640">
    <property type="interactions" value="8"/>
</dbReference>
<dbReference type="FunCoup" id="Q12766">
    <property type="interactions" value="383"/>
</dbReference>
<dbReference type="IntAct" id="Q12766">
    <property type="interactions" value="8"/>
</dbReference>
<dbReference type="MINT" id="Q12766"/>
<dbReference type="STRING" id="9606.ENSP00000421917"/>
<dbReference type="GlyGen" id="Q12766">
    <property type="glycosylation" value="2 sites, 1 O-linked glycan (1 site)"/>
</dbReference>
<dbReference type="iPTMnet" id="Q12766"/>
<dbReference type="PhosphoSitePlus" id="Q12766"/>
<dbReference type="BioMuta" id="HMGXB3"/>
<dbReference type="DMDM" id="160112910"/>
<dbReference type="jPOST" id="Q12766"/>
<dbReference type="MassIVE" id="Q12766"/>
<dbReference type="PaxDb" id="9606-ENSP00000421917"/>
<dbReference type="PeptideAtlas" id="Q12766"/>
<dbReference type="ProteomicsDB" id="34082"/>
<dbReference type="Pumba" id="Q12766"/>
<dbReference type="Antibodypedia" id="1181">
    <property type="antibodies" value="88 antibodies from 22 providers"/>
</dbReference>
<dbReference type="DNASU" id="22993"/>
<dbReference type="Ensembl" id="ENST00000502717.6">
    <property type="protein sequence ID" value="ENSP00000421917.1"/>
    <property type="gene ID" value="ENSG00000113716.13"/>
</dbReference>
<dbReference type="GeneID" id="22993"/>
<dbReference type="KEGG" id="hsa:22993"/>
<dbReference type="MANE-Select" id="ENST00000502717.6">
    <property type="protein sequence ID" value="ENSP00000421917.1"/>
    <property type="RefSeq nucleotide sequence ID" value="NM_014983.3"/>
    <property type="RefSeq protein sequence ID" value="NP_055798.3"/>
</dbReference>
<dbReference type="UCSC" id="uc003lrk.5">
    <property type="organism name" value="human"/>
</dbReference>
<dbReference type="AGR" id="HGNC:28982"/>
<dbReference type="CTD" id="22993"/>
<dbReference type="DisGeNET" id="22993"/>
<dbReference type="GeneCards" id="HMGXB3"/>
<dbReference type="HGNC" id="HGNC:28982">
    <property type="gene designation" value="HMGXB3"/>
</dbReference>
<dbReference type="HPA" id="ENSG00000113716">
    <property type="expression patterns" value="Tissue enriched (parathyroid)"/>
</dbReference>
<dbReference type="MIM" id="619800">
    <property type="type" value="gene"/>
</dbReference>
<dbReference type="neXtProt" id="NX_Q12766"/>
<dbReference type="OpenTargets" id="ENSG00000113716"/>
<dbReference type="PharmGKB" id="PA164720627"/>
<dbReference type="VEuPathDB" id="HostDB:ENSG00000113716"/>
<dbReference type="eggNOG" id="ENOG502QZFJ">
    <property type="taxonomic scope" value="Eukaryota"/>
</dbReference>
<dbReference type="GeneTree" id="ENSGT00390000006983"/>
<dbReference type="InParanoid" id="Q12766"/>
<dbReference type="OrthoDB" id="8948380at2759"/>
<dbReference type="PAN-GO" id="Q12766">
    <property type="GO annotations" value="0 GO annotations based on evolutionary models"/>
</dbReference>
<dbReference type="PhylomeDB" id="Q12766"/>
<dbReference type="TreeFam" id="TF330893"/>
<dbReference type="PathwayCommons" id="Q12766"/>
<dbReference type="SignaLink" id="Q12766"/>
<dbReference type="BioGRID-ORCS" id="22993">
    <property type="hits" value="40 hits in 1186 CRISPR screens"/>
</dbReference>
<dbReference type="ChiTaRS" id="HMGXB3">
    <property type="organism name" value="human"/>
</dbReference>
<dbReference type="GenomeRNAi" id="22993"/>
<dbReference type="Pharos" id="Q12766">
    <property type="development level" value="Tdark"/>
</dbReference>
<dbReference type="PRO" id="PR:Q12766"/>
<dbReference type="Proteomes" id="UP000005640">
    <property type="component" value="Chromosome 5"/>
</dbReference>
<dbReference type="RNAct" id="Q12766">
    <property type="molecule type" value="protein"/>
</dbReference>
<dbReference type="ExpressionAtlas" id="Q12766">
    <property type="expression patterns" value="baseline and differential"/>
</dbReference>
<dbReference type="GO" id="GO:0005634">
    <property type="term" value="C:nucleus"/>
    <property type="evidence" value="ECO:0007669"/>
    <property type="project" value="UniProtKB-SubCell"/>
</dbReference>
<dbReference type="GO" id="GO:0003677">
    <property type="term" value="F:DNA binding"/>
    <property type="evidence" value="ECO:0007669"/>
    <property type="project" value="UniProtKB-KW"/>
</dbReference>
<dbReference type="CDD" id="cd21981">
    <property type="entry name" value="HMG-box_HMGXB3"/>
    <property type="match status" value="1"/>
</dbReference>
<dbReference type="Gene3D" id="1.10.30.10">
    <property type="entry name" value="High mobility group box domain"/>
    <property type="match status" value="1"/>
</dbReference>
<dbReference type="InterPro" id="IPR009071">
    <property type="entry name" value="HMG_box_dom"/>
</dbReference>
<dbReference type="InterPro" id="IPR036910">
    <property type="entry name" value="HMG_box_dom_sf"/>
</dbReference>
<dbReference type="InterPro" id="IPR039598">
    <property type="entry name" value="HMGXB3"/>
</dbReference>
<dbReference type="InterPro" id="IPR040648">
    <property type="entry name" value="HMGXB3_CxC4"/>
</dbReference>
<dbReference type="PANTHER" id="PTHR17609">
    <property type="entry name" value="HMG DOMAIN-CONTAINING PROTEIN 3"/>
    <property type="match status" value="1"/>
</dbReference>
<dbReference type="PANTHER" id="PTHR17609:SF2">
    <property type="entry name" value="HMG DOMAIN-CONTAINING PROTEIN 3"/>
    <property type="match status" value="1"/>
</dbReference>
<dbReference type="Pfam" id="PF18717">
    <property type="entry name" value="CxC4"/>
    <property type="match status" value="1"/>
</dbReference>
<dbReference type="Pfam" id="PF09011">
    <property type="entry name" value="HMG_box_2"/>
    <property type="match status" value="1"/>
</dbReference>
<dbReference type="SMART" id="SM00398">
    <property type="entry name" value="HMG"/>
    <property type="match status" value="1"/>
</dbReference>
<dbReference type="SUPFAM" id="SSF47095">
    <property type="entry name" value="HMG-box"/>
    <property type="match status" value="1"/>
</dbReference>
<dbReference type="PROSITE" id="PS50118">
    <property type="entry name" value="HMG_BOX_2"/>
    <property type="match status" value="1"/>
</dbReference>
<sequence length="1292" mass="141106">MDASYDGTEVTVVMEEIEEAYCYTSPGPPKKKKKYKIHGEKTKKPRSAYLLYYYDIYLKVQQELPHLPQSEINKKISESWRLLSVAERSYYLEKAKLEKEGLDPNSKLSALTAVVPDIPGFRKILPRSDYIIIPKSSLQEDRSCPQLELCVAQNQMSPKGPPLVSNTAPETVPSHAGMAEQCLAVEALAEEVGALTQSGAVQEIATSEILSQDVLLEDASLEVGESHQPYQTSLVIEETLVNGSPDLPTGSLAVPHPQVGESVSVVTVMRDSSESSSSAPATQFIMLPLPAYSVVENPTSIKLTTTYTRRGHGTCTSPGCSFTYVTRHKPPKCPTCGNFLGGKWIPKEKPAKVKVELASGVSSKGSVVKRNQQPVTTEQNSSKENASKLTLENSEAVSQLLNVAPPREVGEESEWEEVIISDAHVLVKEAPGNCGTAVTKTPVVKSGVQPEVTLGTTDNDSPGADVPTPSEGTSTSSPLPAPKKPTGADLLTPGSRAPELKGRARGKPSLLAAARPMRAILPAPVNVGRGSSMGLPRARQAFSLSDKTPSVRTCGLKPSTLKQLGQPIQQPSGPGEVKLPSGPSNRTSQVKVVEVKPDMFPPYKYSCTVTLDLGLATSRGRGKCKNPSCSYVYTNRHKPRICPSCGVNLAKDRTEKTTKAIEVSSPLPDVLNATEPLSTAQREIQRQSTLQLLRKVLQIPENESELAEVFALIHELNSSRLILSNVSEETVTIEQTSWSNYYESPSTQCLLCSSPLFKGGQNSLAGPQECWLLTASRLQTVTAQVKMCLNPHCLALHSFIDIYTGLFNVGNKLLVSLDLLFAIRNQIKLGEDPRVSINVVLKSVQEQTEKTLTSEELSQLQELLCNGYWAFECLTVRDYNDMICGICGVAPKVEMAQRSEENVLALKSVEFTWPEFLGSNEVNVEDFWATMETEVIEQVAFPASIPITKFDASVIAPFFPPLMRGAVVVNTEKDKNLDVQPVPGSGSALVRLLQEGTCKLDEIGSYSEEKLQHLLRQCGIPFGAEDSKDQLCFSLLALYESVQNGARAIRPPRHFTGGKIYKVCPHQVVCGSKYLVRGESARDHVDLLASSRHWPPVYVVDMATSVALCADLCYPELTNQMWGRNQGCFSSPTEPPVSVSCPELLDQHYTVDMTETEHSIQHPVTKTATRRIVHAGLQPNPGDPSAGHHSLALCPELAPYATILASIVDSKPNGVRQRPIAFDNATHYYLYNRLMDFLTSREIVNRQIHDIVQSCQPGEVVIRDTLYRLGVAQIKTETEEEGEEEEVAAVAE</sequence>
<organism>
    <name type="scientific">Homo sapiens</name>
    <name type="common">Human</name>
    <dbReference type="NCBI Taxonomy" id="9606"/>
    <lineage>
        <taxon>Eukaryota</taxon>
        <taxon>Metazoa</taxon>
        <taxon>Chordata</taxon>
        <taxon>Craniata</taxon>
        <taxon>Vertebrata</taxon>
        <taxon>Euteleostomi</taxon>
        <taxon>Mammalia</taxon>
        <taxon>Eutheria</taxon>
        <taxon>Euarchontoglires</taxon>
        <taxon>Primates</taxon>
        <taxon>Haplorrhini</taxon>
        <taxon>Catarrhini</taxon>
        <taxon>Hominidae</taxon>
        <taxon>Homo</taxon>
    </lineage>
</organism>
<gene>
    <name evidence="5" type="primary">HMGXB3</name>
    <name evidence="3" type="synonym">KIAA0194</name>
    <name type="synonym">SMF</name>
</gene>
<reference key="1">
    <citation type="journal article" date="1996" name="DNA Res.">
        <title>Prediction of the coding sequences of unidentified human genes. V. The coding sequences of 40 new genes (KIAA0161-KIAA0200) deduced by analysis of cDNA clones from human cell line KG-1.</title>
        <authorList>
            <person name="Nagase T."/>
            <person name="Seki N."/>
            <person name="Ishikawa K."/>
            <person name="Tanaka A."/>
            <person name="Nomura N."/>
        </authorList>
    </citation>
    <scope>NUCLEOTIDE SEQUENCE [LARGE SCALE MRNA]</scope>
    <source>
        <tissue>Bone marrow</tissue>
    </source>
</reference>
<reference key="2">
    <citation type="journal article" date="2004" name="Nature">
        <title>The DNA sequence and comparative analysis of human chromosome 5.</title>
        <authorList>
            <person name="Schmutz J."/>
            <person name="Martin J."/>
            <person name="Terry A."/>
            <person name="Couronne O."/>
            <person name="Grimwood J."/>
            <person name="Lowry S."/>
            <person name="Gordon L.A."/>
            <person name="Scott D."/>
            <person name="Xie G."/>
            <person name="Huang W."/>
            <person name="Hellsten U."/>
            <person name="Tran-Gyamfi M."/>
            <person name="She X."/>
            <person name="Prabhakar S."/>
            <person name="Aerts A."/>
            <person name="Altherr M."/>
            <person name="Bajorek E."/>
            <person name="Black S."/>
            <person name="Branscomb E."/>
            <person name="Caoile C."/>
            <person name="Challacombe J.F."/>
            <person name="Chan Y.M."/>
            <person name="Denys M."/>
            <person name="Detter J.C."/>
            <person name="Escobar J."/>
            <person name="Flowers D."/>
            <person name="Fotopulos D."/>
            <person name="Glavina T."/>
            <person name="Gomez M."/>
            <person name="Gonzales E."/>
            <person name="Goodstein D."/>
            <person name="Grigoriev I."/>
            <person name="Groza M."/>
            <person name="Hammon N."/>
            <person name="Hawkins T."/>
            <person name="Haydu L."/>
            <person name="Israni S."/>
            <person name="Jett J."/>
            <person name="Kadner K."/>
            <person name="Kimball H."/>
            <person name="Kobayashi A."/>
            <person name="Lopez F."/>
            <person name="Lou Y."/>
            <person name="Martinez D."/>
            <person name="Medina C."/>
            <person name="Morgan J."/>
            <person name="Nandkeshwar R."/>
            <person name="Noonan J.P."/>
            <person name="Pitluck S."/>
            <person name="Pollard M."/>
            <person name="Predki P."/>
            <person name="Priest J."/>
            <person name="Ramirez L."/>
            <person name="Retterer J."/>
            <person name="Rodriguez A."/>
            <person name="Rogers S."/>
            <person name="Salamov A."/>
            <person name="Salazar A."/>
            <person name="Thayer N."/>
            <person name="Tice H."/>
            <person name="Tsai M."/>
            <person name="Ustaszewska A."/>
            <person name="Vo N."/>
            <person name="Wheeler J."/>
            <person name="Wu K."/>
            <person name="Yang J."/>
            <person name="Dickson M."/>
            <person name="Cheng J.-F."/>
            <person name="Eichler E.E."/>
            <person name="Olsen A."/>
            <person name="Pennacchio L.A."/>
            <person name="Rokhsar D.S."/>
            <person name="Richardson P."/>
            <person name="Lucas S.M."/>
            <person name="Myers R.M."/>
            <person name="Rubin E.M."/>
        </authorList>
    </citation>
    <scope>NUCLEOTIDE SEQUENCE [LARGE SCALE GENOMIC DNA]</scope>
</reference>
<reference key="3">
    <citation type="submission" date="2005-09" db="EMBL/GenBank/DDBJ databases">
        <authorList>
            <person name="Mural R.J."/>
            <person name="Istrail S."/>
            <person name="Sutton G.G."/>
            <person name="Florea L."/>
            <person name="Halpern A.L."/>
            <person name="Mobarry C.M."/>
            <person name="Lippert R."/>
            <person name="Walenz B."/>
            <person name="Shatkay H."/>
            <person name="Dew I."/>
            <person name="Miller J.R."/>
            <person name="Flanigan M.J."/>
            <person name="Edwards N.J."/>
            <person name="Bolanos R."/>
            <person name="Fasulo D."/>
            <person name="Halldorsson B.V."/>
            <person name="Hannenhalli S."/>
            <person name="Turner R."/>
            <person name="Yooseph S."/>
            <person name="Lu F."/>
            <person name="Nusskern D.R."/>
            <person name="Shue B.C."/>
            <person name="Zheng X.H."/>
            <person name="Zhong F."/>
            <person name="Delcher A.L."/>
            <person name="Huson D.H."/>
            <person name="Kravitz S.A."/>
            <person name="Mouchard L."/>
            <person name="Reinert K."/>
            <person name="Remington K.A."/>
            <person name="Clark A.G."/>
            <person name="Waterman M.S."/>
            <person name="Eichler E.E."/>
            <person name="Adams M.D."/>
            <person name="Hunkapiller M.W."/>
            <person name="Myers E.W."/>
            <person name="Venter J.C."/>
        </authorList>
    </citation>
    <scope>NUCLEOTIDE SEQUENCE [LARGE SCALE GENOMIC DNA]</scope>
</reference>
<reference key="4">
    <citation type="journal article" date="2004" name="Genome Res.">
        <title>The status, quality, and expansion of the NIH full-length cDNA project: the Mammalian Gene Collection (MGC).</title>
        <authorList>
            <consortium name="The MGC Project Team"/>
        </authorList>
    </citation>
    <scope>NUCLEOTIDE SEQUENCE [LARGE SCALE MRNA]</scope>
    <source>
        <tissue>Brain</tissue>
    </source>
</reference>
<reference key="5">
    <citation type="journal article" date="1997" name="Genomics">
        <title>Sequence analysis of two genomic regions containing the KIT and the FMS receptor tyrosine kinase genes.</title>
        <authorList>
            <person name="Andre C."/>
            <person name="Hampe A."/>
            <person name="Lachaume P."/>
            <person name="Martin E."/>
            <person name="Wang X.P."/>
            <person name="Manus V."/>
            <person name="Hu W.X."/>
            <person name="Galibert F."/>
        </authorList>
    </citation>
    <scope>NUCLEOTIDE SEQUENCE [GENOMIC DNA] OF 915-1292</scope>
    <source>
        <tissue>Placenta</tissue>
    </source>
</reference>
<keyword id="KW-0238">DNA-binding</keyword>
<keyword id="KW-0539">Nucleus</keyword>
<keyword id="KW-1267">Proteomics identification</keyword>
<keyword id="KW-1185">Reference proteome</keyword>
<comment type="subcellular location">
    <subcellularLocation>
        <location evidence="1">Nucleus</location>
    </subcellularLocation>
</comment>
<comment type="sequence caution" evidence="4">
    <conflict type="erroneous initiation">
        <sequence resource="EMBL-CDS" id="AAH51025"/>
    </conflict>
    <text>Extended N-terminus.</text>
</comment>
<comment type="sequence caution" evidence="4">
    <conflict type="erroneous initiation">
        <sequence resource="EMBL-CDS" id="BAA12107"/>
    </conflict>
    <text>Extended N-terminus.</text>
</comment>
<name>HMGX3_HUMAN</name>
<protein>
    <recommendedName>
        <fullName evidence="4">HMG domain-containing protein 3</fullName>
    </recommendedName>
    <alternativeName>
        <fullName>HMG box-containing protein 3</fullName>
    </alternativeName>
    <alternativeName>
        <fullName>Protein SMF</fullName>
    </alternativeName>
</protein>
<evidence type="ECO:0000255" key="1">
    <source>
        <dbReference type="PROSITE-ProRule" id="PRU00267"/>
    </source>
</evidence>
<evidence type="ECO:0000256" key="2">
    <source>
        <dbReference type="SAM" id="MobiDB-lite"/>
    </source>
</evidence>
<evidence type="ECO:0000303" key="3">
    <source>
    </source>
</evidence>
<evidence type="ECO:0000305" key="4"/>
<evidence type="ECO:0000312" key="5">
    <source>
        <dbReference type="HGNC" id="HGNC:28982"/>
    </source>
</evidence>
<accession>Q12766</accession>
<accession>G5E9Y4</accession>
<accession>Q86UG3</accession>
<accession>Q9UMF4</accession>
<proteinExistence type="evidence at protein level"/>
<feature type="chain" id="PRO_0000048806" description="HMG domain-containing protein 3">
    <location>
        <begin position="1"/>
        <end position="1292"/>
    </location>
</feature>
<feature type="DNA-binding region" description="HMG box" evidence="1">
    <location>
        <begin position="42"/>
        <end position="110"/>
    </location>
</feature>
<feature type="region of interest" description="Disordered" evidence="2">
    <location>
        <begin position="363"/>
        <end position="391"/>
    </location>
</feature>
<feature type="region of interest" description="Disordered" evidence="2">
    <location>
        <begin position="448"/>
        <end position="505"/>
    </location>
</feature>
<feature type="region of interest" description="Disordered" evidence="2">
    <location>
        <begin position="562"/>
        <end position="588"/>
    </location>
</feature>
<feature type="compositionally biased region" description="Polar residues" evidence="2">
    <location>
        <begin position="370"/>
        <end position="391"/>
    </location>
</feature>
<feature type="compositionally biased region" description="Low complexity" evidence="2">
    <location>
        <begin position="467"/>
        <end position="478"/>
    </location>
</feature>
<feature type="compositionally biased region" description="Polar residues" evidence="2">
    <location>
        <begin position="562"/>
        <end position="572"/>
    </location>
</feature>
<feature type="sequence conflict" description="In Ref. 3; AAH51025 and 4; BAA12107." evidence="4" ref="3 4">
    <original>A</original>
    <variation>V</variation>
    <location>
        <position position="488"/>
    </location>
</feature>